<protein>
    <recommendedName>
        <fullName evidence="1">Ribosomal RNA large subunit methyltransferase E</fullName>
        <ecNumber evidence="1">2.1.1.166</ecNumber>
    </recommendedName>
    <alternativeName>
        <fullName evidence="1">23S rRNA Um2552 methyltransferase</fullName>
    </alternativeName>
    <alternativeName>
        <fullName evidence="1">rRNA (uridine-2'-O-)-methyltransferase</fullName>
    </alternativeName>
</protein>
<organism>
    <name type="scientific">Neisseria meningitidis serogroup B (strain ATCC BAA-335 / MC58)</name>
    <dbReference type="NCBI Taxonomy" id="122586"/>
    <lineage>
        <taxon>Bacteria</taxon>
        <taxon>Pseudomonadati</taxon>
        <taxon>Pseudomonadota</taxon>
        <taxon>Betaproteobacteria</taxon>
        <taxon>Neisseriales</taxon>
        <taxon>Neisseriaceae</taxon>
        <taxon>Neisseria</taxon>
    </lineage>
</organism>
<evidence type="ECO:0000255" key="1">
    <source>
        <dbReference type="HAMAP-Rule" id="MF_01547"/>
    </source>
</evidence>
<comment type="function">
    <text evidence="1">Specifically methylates the uridine in position 2552 of 23S rRNA at the 2'-O position of the ribose in the fully assembled 50S ribosomal subunit.</text>
</comment>
<comment type="catalytic activity">
    <reaction evidence="1">
        <text>uridine(2552) in 23S rRNA + S-adenosyl-L-methionine = 2'-O-methyluridine(2552) in 23S rRNA + S-adenosyl-L-homocysteine + H(+)</text>
        <dbReference type="Rhea" id="RHEA:42720"/>
        <dbReference type="Rhea" id="RHEA-COMP:10202"/>
        <dbReference type="Rhea" id="RHEA-COMP:10203"/>
        <dbReference type="ChEBI" id="CHEBI:15378"/>
        <dbReference type="ChEBI" id="CHEBI:57856"/>
        <dbReference type="ChEBI" id="CHEBI:59789"/>
        <dbReference type="ChEBI" id="CHEBI:65315"/>
        <dbReference type="ChEBI" id="CHEBI:74478"/>
        <dbReference type="EC" id="2.1.1.166"/>
    </reaction>
</comment>
<comment type="subcellular location">
    <subcellularLocation>
        <location evidence="1">Cytoplasm</location>
    </subcellularLocation>
</comment>
<comment type="similarity">
    <text evidence="1">Belongs to the class I-like SAM-binding methyltransferase superfamily. RNA methyltransferase RlmE family.</text>
</comment>
<dbReference type="EC" id="2.1.1.166" evidence="1"/>
<dbReference type="EMBL" id="AE002098">
    <property type="protein sequence ID" value="AAF41212.1"/>
    <property type="molecule type" value="Genomic_DNA"/>
</dbReference>
<dbReference type="RefSeq" id="NP_273841.1">
    <property type="nucleotide sequence ID" value="NC_003112.2"/>
</dbReference>
<dbReference type="RefSeq" id="WP_002213963.1">
    <property type="nucleotide sequence ID" value="NC_003112.2"/>
</dbReference>
<dbReference type="SMR" id="Q7DDL2"/>
<dbReference type="FunCoup" id="Q7DDL2">
    <property type="interactions" value="400"/>
</dbReference>
<dbReference type="STRING" id="122586.NMB0799"/>
<dbReference type="PaxDb" id="122586-NMB0799"/>
<dbReference type="KEGG" id="nme:NMB0799"/>
<dbReference type="PATRIC" id="fig|122586.8.peg.1011"/>
<dbReference type="HOGENOM" id="CLU_009422_4_0_4"/>
<dbReference type="InParanoid" id="Q7DDL2"/>
<dbReference type="OrthoDB" id="9790080at2"/>
<dbReference type="Proteomes" id="UP000000425">
    <property type="component" value="Chromosome"/>
</dbReference>
<dbReference type="GO" id="GO:0005737">
    <property type="term" value="C:cytoplasm"/>
    <property type="evidence" value="ECO:0007669"/>
    <property type="project" value="UniProtKB-SubCell"/>
</dbReference>
<dbReference type="GO" id="GO:0008650">
    <property type="term" value="F:rRNA (uridine-2'-O-)-methyltransferase activity"/>
    <property type="evidence" value="ECO:0000318"/>
    <property type="project" value="GO_Central"/>
</dbReference>
<dbReference type="GO" id="GO:0001510">
    <property type="term" value="P:RNA methylation"/>
    <property type="evidence" value="ECO:0000318"/>
    <property type="project" value="GO_Central"/>
</dbReference>
<dbReference type="FunFam" id="3.40.50.150:FF:000005">
    <property type="entry name" value="Ribosomal RNA large subunit methyltransferase E"/>
    <property type="match status" value="1"/>
</dbReference>
<dbReference type="Gene3D" id="3.40.50.150">
    <property type="entry name" value="Vaccinia Virus protein VP39"/>
    <property type="match status" value="1"/>
</dbReference>
<dbReference type="HAMAP" id="MF_01547">
    <property type="entry name" value="RNA_methyltr_E"/>
    <property type="match status" value="1"/>
</dbReference>
<dbReference type="InterPro" id="IPR050082">
    <property type="entry name" value="RNA_methyltr_RlmE"/>
</dbReference>
<dbReference type="InterPro" id="IPR002877">
    <property type="entry name" value="RNA_MeTrfase_FtsJ_dom"/>
</dbReference>
<dbReference type="InterPro" id="IPR015507">
    <property type="entry name" value="rRNA-MeTfrase_E"/>
</dbReference>
<dbReference type="InterPro" id="IPR029063">
    <property type="entry name" value="SAM-dependent_MTases_sf"/>
</dbReference>
<dbReference type="PANTHER" id="PTHR10920">
    <property type="entry name" value="RIBOSOMAL RNA METHYLTRANSFERASE"/>
    <property type="match status" value="1"/>
</dbReference>
<dbReference type="PANTHER" id="PTHR10920:SF18">
    <property type="entry name" value="RRNA METHYLTRANSFERASE 2, MITOCHONDRIAL"/>
    <property type="match status" value="1"/>
</dbReference>
<dbReference type="Pfam" id="PF01728">
    <property type="entry name" value="FtsJ"/>
    <property type="match status" value="1"/>
</dbReference>
<dbReference type="PIRSF" id="PIRSF005461">
    <property type="entry name" value="23S_rRNA_mtase"/>
    <property type="match status" value="1"/>
</dbReference>
<dbReference type="SUPFAM" id="SSF53335">
    <property type="entry name" value="S-adenosyl-L-methionine-dependent methyltransferases"/>
    <property type="match status" value="1"/>
</dbReference>
<sequence length="206" mass="22721">MAVRSKSSKAWLHEHVNDHYVHMAQKDGYRARAAYKLLEINEKDKLIKPGTVLADLGSAPGSWSQVAAKLTGTSGAVFALDILPMEAIGGVSFIQGDFRENDVLAQFETLLDNRPLDLVICDMAPNMSGNAVSDQARSFYLCELALDFASQHLKTGGSFLVKVFQGAGYQEYMAAMREIFGTVQTRKPEASRNRSSEIYLLGKNKR</sequence>
<keyword id="KW-0963">Cytoplasm</keyword>
<keyword id="KW-0489">Methyltransferase</keyword>
<keyword id="KW-1185">Reference proteome</keyword>
<keyword id="KW-0698">rRNA processing</keyword>
<keyword id="KW-0949">S-adenosyl-L-methionine</keyword>
<keyword id="KW-0808">Transferase</keyword>
<gene>
    <name evidence="1" type="primary">rlmE</name>
    <name evidence="1" type="synonym">ftsJ</name>
    <name evidence="1" type="synonym">rrmJ</name>
    <name type="ordered locus">NMB0799</name>
</gene>
<accession>Q7DDL2</accession>
<feature type="chain" id="PRO_0000155513" description="Ribosomal RNA large subunit methyltransferase E">
    <location>
        <begin position="1"/>
        <end position="206"/>
    </location>
</feature>
<feature type="active site" description="Proton acceptor" evidence="1">
    <location>
        <position position="162"/>
    </location>
</feature>
<feature type="binding site" evidence="1">
    <location>
        <position position="61"/>
    </location>
    <ligand>
        <name>S-adenosyl-L-methionine</name>
        <dbReference type="ChEBI" id="CHEBI:59789"/>
    </ligand>
</feature>
<feature type="binding site" evidence="1">
    <location>
        <position position="63"/>
    </location>
    <ligand>
        <name>S-adenosyl-L-methionine</name>
        <dbReference type="ChEBI" id="CHEBI:59789"/>
    </ligand>
</feature>
<feature type="binding site" evidence="1">
    <location>
        <position position="81"/>
    </location>
    <ligand>
        <name>S-adenosyl-L-methionine</name>
        <dbReference type="ChEBI" id="CHEBI:59789"/>
    </ligand>
</feature>
<feature type="binding site" evidence="1">
    <location>
        <position position="97"/>
    </location>
    <ligand>
        <name>S-adenosyl-L-methionine</name>
        <dbReference type="ChEBI" id="CHEBI:59789"/>
    </ligand>
</feature>
<feature type="binding site" evidence="1">
    <location>
        <position position="122"/>
    </location>
    <ligand>
        <name>S-adenosyl-L-methionine</name>
        <dbReference type="ChEBI" id="CHEBI:59789"/>
    </ligand>
</feature>
<proteinExistence type="inferred from homology"/>
<name>RLME_NEIMB</name>
<reference key="1">
    <citation type="journal article" date="2000" name="Science">
        <title>Complete genome sequence of Neisseria meningitidis serogroup B strain MC58.</title>
        <authorList>
            <person name="Tettelin H."/>
            <person name="Saunders N.J."/>
            <person name="Heidelberg J.F."/>
            <person name="Jeffries A.C."/>
            <person name="Nelson K.E."/>
            <person name="Eisen J.A."/>
            <person name="Ketchum K.A."/>
            <person name="Hood D.W."/>
            <person name="Peden J.F."/>
            <person name="Dodson R.J."/>
            <person name="Nelson W.C."/>
            <person name="Gwinn M.L."/>
            <person name="DeBoy R.T."/>
            <person name="Peterson J.D."/>
            <person name="Hickey E.K."/>
            <person name="Haft D.H."/>
            <person name="Salzberg S.L."/>
            <person name="White O."/>
            <person name="Fleischmann R.D."/>
            <person name="Dougherty B.A."/>
            <person name="Mason T.M."/>
            <person name="Ciecko A."/>
            <person name="Parksey D.S."/>
            <person name="Blair E."/>
            <person name="Cittone H."/>
            <person name="Clark E.B."/>
            <person name="Cotton M.D."/>
            <person name="Utterback T.R."/>
            <person name="Khouri H.M."/>
            <person name="Qin H."/>
            <person name="Vamathevan J.J."/>
            <person name="Gill J."/>
            <person name="Scarlato V."/>
            <person name="Masignani V."/>
            <person name="Pizza M."/>
            <person name="Grandi G."/>
            <person name="Sun L."/>
            <person name="Smith H.O."/>
            <person name="Fraser C.M."/>
            <person name="Moxon E.R."/>
            <person name="Rappuoli R."/>
            <person name="Venter J.C."/>
        </authorList>
    </citation>
    <scope>NUCLEOTIDE SEQUENCE [LARGE SCALE GENOMIC DNA]</scope>
    <source>
        <strain>ATCC BAA-335 / MC58</strain>
    </source>
</reference>